<feature type="chain" id="PRO_0000076435" description="Transcription factor Jun">
    <location>
        <begin position="1"/>
        <end position="314"/>
    </location>
</feature>
<feature type="domain" description="bZIP" evidence="2">
    <location>
        <begin position="235"/>
        <end position="298"/>
    </location>
</feature>
<feature type="region of interest" description="Basic motif" evidence="2">
    <location>
        <begin position="235"/>
        <end position="262"/>
    </location>
</feature>
<feature type="region of interest" description="Leucine-zipper" evidence="2">
    <location>
        <begin position="263"/>
        <end position="291"/>
    </location>
</feature>
<dbReference type="EMBL" id="L35273">
    <property type="protein sequence ID" value="AAA49537.1"/>
    <property type="molecule type" value="mRNA"/>
</dbReference>
<dbReference type="RefSeq" id="XP_009087016.2">
    <property type="nucleotide sequence ID" value="XM_009088768.3"/>
</dbReference>
<dbReference type="SMR" id="P54864"/>
<dbReference type="GeneID" id="103815057"/>
<dbReference type="KEGG" id="scan:103815057"/>
<dbReference type="CTD" id="3725"/>
<dbReference type="OrthoDB" id="2187714at2759"/>
<dbReference type="Proteomes" id="UP000694409">
    <property type="component" value="Unplaced"/>
</dbReference>
<dbReference type="GO" id="GO:0005634">
    <property type="term" value="C:nucleus"/>
    <property type="evidence" value="ECO:0007669"/>
    <property type="project" value="UniProtKB-SubCell"/>
</dbReference>
<dbReference type="GO" id="GO:0005667">
    <property type="term" value="C:transcription regulator complex"/>
    <property type="evidence" value="ECO:0007669"/>
    <property type="project" value="TreeGrafter"/>
</dbReference>
<dbReference type="GO" id="GO:0000981">
    <property type="term" value="F:DNA-binding transcription factor activity, RNA polymerase II-specific"/>
    <property type="evidence" value="ECO:0007669"/>
    <property type="project" value="TreeGrafter"/>
</dbReference>
<dbReference type="GO" id="GO:0000978">
    <property type="term" value="F:RNA polymerase II cis-regulatory region sequence-specific DNA binding"/>
    <property type="evidence" value="ECO:0007669"/>
    <property type="project" value="TreeGrafter"/>
</dbReference>
<dbReference type="GO" id="GO:0000976">
    <property type="term" value="F:transcription cis-regulatory region binding"/>
    <property type="evidence" value="ECO:0000250"/>
    <property type="project" value="UniProtKB"/>
</dbReference>
<dbReference type="GO" id="GO:0045944">
    <property type="term" value="P:positive regulation of transcription by RNA polymerase II"/>
    <property type="evidence" value="ECO:0000250"/>
    <property type="project" value="UniProtKB"/>
</dbReference>
<dbReference type="GO" id="GO:0051726">
    <property type="term" value="P:regulation of cell cycle"/>
    <property type="evidence" value="ECO:0007669"/>
    <property type="project" value="TreeGrafter"/>
</dbReference>
<dbReference type="GO" id="GO:0042127">
    <property type="term" value="P:regulation of cell population proliferation"/>
    <property type="evidence" value="ECO:0007669"/>
    <property type="project" value="TreeGrafter"/>
</dbReference>
<dbReference type="CDD" id="cd14696">
    <property type="entry name" value="bZIP_Jun"/>
    <property type="match status" value="1"/>
</dbReference>
<dbReference type="FunFam" id="1.20.5.170:FF:000012">
    <property type="entry name" value="Putative transcription factor AP-1"/>
    <property type="match status" value="1"/>
</dbReference>
<dbReference type="Gene3D" id="1.20.5.170">
    <property type="match status" value="1"/>
</dbReference>
<dbReference type="InterPro" id="IPR050946">
    <property type="entry name" value="AP-1_TF_bZIP"/>
</dbReference>
<dbReference type="InterPro" id="IPR004827">
    <property type="entry name" value="bZIP"/>
</dbReference>
<dbReference type="InterPro" id="IPR046347">
    <property type="entry name" value="bZIP_sf"/>
</dbReference>
<dbReference type="InterPro" id="IPR005643">
    <property type="entry name" value="JNK"/>
</dbReference>
<dbReference type="InterPro" id="IPR002112">
    <property type="entry name" value="Leuzip_Jun"/>
</dbReference>
<dbReference type="InterPro" id="IPR008917">
    <property type="entry name" value="TF_DNA-bd_sf"/>
</dbReference>
<dbReference type="PANTHER" id="PTHR11462">
    <property type="entry name" value="JUN TRANSCRIPTION FACTOR-RELATED"/>
    <property type="match status" value="1"/>
</dbReference>
<dbReference type="PANTHER" id="PTHR11462:SF8">
    <property type="entry name" value="TRANSCRIPTION FACTOR JUN"/>
    <property type="match status" value="1"/>
</dbReference>
<dbReference type="Pfam" id="PF00170">
    <property type="entry name" value="bZIP_1"/>
    <property type="match status" value="1"/>
</dbReference>
<dbReference type="Pfam" id="PF03957">
    <property type="entry name" value="Jun"/>
    <property type="match status" value="1"/>
</dbReference>
<dbReference type="PRINTS" id="PR00043">
    <property type="entry name" value="LEUZIPPRJUN"/>
</dbReference>
<dbReference type="SMART" id="SM00338">
    <property type="entry name" value="BRLZ"/>
    <property type="match status" value="1"/>
</dbReference>
<dbReference type="SUPFAM" id="SSF47454">
    <property type="entry name" value="A DNA-binding domain in eukaryotic transcription factors"/>
    <property type="match status" value="1"/>
</dbReference>
<dbReference type="SUPFAM" id="SSF57959">
    <property type="entry name" value="Leucine zipper domain"/>
    <property type="match status" value="1"/>
</dbReference>
<dbReference type="PROSITE" id="PS50217">
    <property type="entry name" value="BZIP"/>
    <property type="match status" value="1"/>
</dbReference>
<dbReference type="PROSITE" id="PS00036">
    <property type="entry name" value="BZIP_BASIC"/>
    <property type="match status" value="1"/>
</dbReference>
<gene>
    <name type="primary">JUN</name>
</gene>
<reference key="1">
    <citation type="journal article" date="1994" name="Brain Res. Mol. Brain Res.">
        <title>Immediate-early gene responses in the avian song control system: cloning and expression analysis of the canary c-jun cDNA.</title>
        <authorList>
            <person name="Nastiuk K.L."/>
            <person name="Mello C.V."/>
            <person name="George J.M."/>
            <person name="Clayton D.F."/>
        </authorList>
    </citation>
    <scope>NUCLEOTIDE SEQUENCE [MRNA]</scope>
    <source>
        <strain>Wasserschlager</strain>
        <tissue>Brain</tissue>
    </source>
</reference>
<protein>
    <recommendedName>
        <fullName evidence="3">Transcription factor Jun</fullName>
    </recommendedName>
    <alternativeName>
        <fullName>Proto-oncogene c-Jun</fullName>
    </alternativeName>
    <alternativeName>
        <fullName evidence="3">Transcription factor AP-1 subunit Jun</fullName>
    </alternativeName>
</protein>
<comment type="function">
    <text evidence="1">Transcription factor that recognizes and binds to the enhancer heptamer motif 5'-TGA[CG]TCA-3'. May be involved in activated KRAS-mediated transcriptional activation of USP28. May bind to the USP28 promoter.</text>
</comment>
<comment type="subunit">
    <text>Interacts with FOS to form a dimer.</text>
</comment>
<comment type="subcellular location">
    <subcellularLocation>
        <location>Nucleus</location>
    </subcellularLocation>
</comment>
<comment type="similarity">
    <text evidence="3">Belongs to the bZIP family. Jun subfamily.</text>
</comment>
<organism>
    <name type="scientific">Serinus canaria</name>
    <name type="common">Island canary</name>
    <name type="synonym">Fringilla canaria</name>
    <dbReference type="NCBI Taxonomy" id="9135"/>
    <lineage>
        <taxon>Eukaryota</taxon>
        <taxon>Metazoa</taxon>
        <taxon>Chordata</taxon>
        <taxon>Craniata</taxon>
        <taxon>Vertebrata</taxon>
        <taxon>Euteleostomi</taxon>
        <taxon>Archelosauria</taxon>
        <taxon>Archosauria</taxon>
        <taxon>Dinosauria</taxon>
        <taxon>Saurischia</taxon>
        <taxon>Theropoda</taxon>
        <taxon>Coelurosauria</taxon>
        <taxon>Aves</taxon>
        <taxon>Neognathae</taxon>
        <taxon>Neoaves</taxon>
        <taxon>Telluraves</taxon>
        <taxon>Australaves</taxon>
        <taxon>Passeriformes</taxon>
        <taxon>Passeroidea</taxon>
        <taxon>Fringillidae</taxon>
        <taxon>Carduelinae</taxon>
        <taxon>Serinus</taxon>
    </lineage>
</organism>
<keyword id="KW-0010">Activator</keyword>
<keyword id="KW-0238">DNA-binding</keyword>
<keyword id="KW-0539">Nucleus</keyword>
<keyword id="KW-0656">Proto-oncogene</keyword>
<keyword id="KW-1185">Reference proteome</keyword>
<keyword id="KW-0804">Transcription</keyword>
<keyword id="KW-0805">Transcription regulation</keyword>
<sequence length="314" mass="34518">MSAKMEPTFYEDALSAGFAPPESGGYGYNNAKVLKQNMTLNLSDPSSNLKPHLRNKNADILTSPDVGLLKLASPELERLIIQSSNGLITTTPTPTQFLCPKNVTDEQEGFAEGFVRALAELHNQNTLPSVTSAAQPVTSGMAPVSSMAGSTSFNTSLHSEPPVYANLSNFNPNALSSAPNYNANSMGYAPQHHINPQMPVQHPRLQALKEEPQTVPEMPGETPPLSPIDMESQERIKAERKRMRNRIAASKCRKRKLERIARLEEKVKTLKAQNSELASTANMLREQVAQLKQKVMNHVNSGCQLMLTQQLQTF</sequence>
<evidence type="ECO:0000250" key="1">
    <source>
        <dbReference type="UniProtKB" id="P05412"/>
    </source>
</evidence>
<evidence type="ECO:0000255" key="2">
    <source>
        <dbReference type="PROSITE-ProRule" id="PRU00978"/>
    </source>
</evidence>
<evidence type="ECO:0000305" key="3"/>
<name>JUN_SERCA</name>
<proteinExistence type="evidence at transcript level"/>
<accession>P54864</accession>